<evidence type="ECO:0000255" key="1">
    <source>
        <dbReference type="HAMAP-Rule" id="MF_00693"/>
    </source>
</evidence>
<sequence length="252" mass="26783">MAGHSKWANIQHRKGKQDKKRAVLFARLSKEITVASKMGGPDPAMNPRLRLAITNAKGVSVPKDNIQRAIDKGQSSGGADYADIRYEGVGPGGVGIIVEASTDNKNRAATDIRTAFSKNGGTLGTTGSVSFNFDQLGEIEYPVSAGSADEVMEAAIMAGAQDVESNEDGHWIYTAREDFAAVSTALADTFGSKVEPTSAKIIWKPKVTTPIAGDAADQLMKMLDVLDELDDVQSVYDNSEISEDEMARLSGG</sequence>
<name>Y161_HYPNA</name>
<proteinExistence type="inferred from homology"/>
<feature type="chain" id="PRO_1000045321" description="Probable transcriptional regulatory protein HNE_0161">
    <location>
        <begin position="1"/>
        <end position="252"/>
    </location>
</feature>
<protein>
    <recommendedName>
        <fullName evidence="1">Probable transcriptional regulatory protein HNE_0161</fullName>
    </recommendedName>
</protein>
<comment type="subcellular location">
    <subcellularLocation>
        <location evidence="1">Cytoplasm</location>
    </subcellularLocation>
</comment>
<comment type="similarity">
    <text evidence="1">Belongs to the TACO1 family.</text>
</comment>
<keyword id="KW-0963">Cytoplasm</keyword>
<keyword id="KW-0238">DNA-binding</keyword>
<keyword id="KW-1185">Reference proteome</keyword>
<keyword id="KW-0804">Transcription</keyword>
<keyword id="KW-0805">Transcription regulation</keyword>
<gene>
    <name type="ordered locus">HNE_0161</name>
</gene>
<accession>Q0C5U8</accession>
<organism>
    <name type="scientific">Hyphomonas neptunium (strain ATCC 15444)</name>
    <dbReference type="NCBI Taxonomy" id="228405"/>
    <lineage>
        <taxon>Bacteria</taxon>
        <taxon>Pseudomonadati</taxon>
        <taxon>Pseudomonadota</taxon>
        <taxon>Alphaproteobacteria</taxon>
        <taxon>Hyphomonadales</taxon>
        <taxon>Hyphomonadaceae</taxon>
        <taxon>Hyphomonas</taxon>
    </lineage>
</organism>
<reference key="1">
    <citation type="journal article" date="2006" name="J. Bacteriol.">
        <title>Comparative genomic evidence for a close relationship between the dimorphic prosthecate bacteria Hyphomonas neptunium and Caulobacter crescentus.</title>
        <authorList>
            <person name="Badger J.H."/>
            <person name="Hoover T.R."/>
            <person name="Brun Y.V."/>
            <person name="Weiner R.M."/>
            <person name="Laub M.T."/>
            <person name="Alexandre G."/>
            <person name="Mrazek J."/>
            <person name="Ren Q."/>
            <person name="Paulsen I.T."/>
            <person name="Nelson K.E."/>
            <person name="Khouri H.M."/>
            <person name="Radune D."/>
            <person name="Sosa J."/>
            <person name="Dodson R.J."/>
            <person name="Sullivan S.A."/>
            <person name="Rosovitz M.J."/>
            <person name="Madupu R."/>
            <person name="Brinkac L.M."/>
            <person name="Durkin A.S."/>
            <person name="Daugherty S.C."/>
            <person name="Kothari S.P."/>
            <person name="Giglio M.G."/>
            <person name="Zhou L."/>
            <person name="Haft D.H."/>
            <person name="Selengut J.D."/>
            <person name="Davidsen T.M."/>
            <person name="Yang Q."/>
            <person name="Zafar N."/>
            <person name="Ward N.L."/>
        </authorList>
    </citation>
    <scope>NUCLEOTIDE SEQUENCE [LARGE SCALE GENOMIC DNA]</scope>
    <source>
        <strain>ATCC 15444</strain>
    </source>
</reference>
<dbReference type="EMBL" id="CP000158">
    <property type="protein sequence ID" value="ABI78175.1"/>
    <property type="molecule type" value="Genomic_DNA"/>
</dbReference>
<dbReference type="RefSeq" id="WP_011645195.1">
    <property type="nucleotide sequence ID" value="NC_008358.1"/>
</dbReference>
<dbReference type="SMR" id="Q0C5U8"/>
<dbReference type="STRING" id="228405.HNE_0161"/>
<dbReference type="KEGG" id="hne:HNE_0161"/>
<dbReference type="eggNOG" id="COG0217">
    <property type="taxonomic scope" value="Bacteria"/>
</dbReference>
<dbReference type="HOGENOM" id="CLU_062974_2_2_5"/>
<dbReference type="Proteomes" id="UP000001959">
    <property type="component" value="Chromosome"/>
</dbReference>
<dbReference type="GO" id="GO:0005829">
    <property type="term" value="C:cytosol"/>
    <property type="evidence" value="ECO:0007669"/>
    <property type="project" value="TreeGrafter"/>
</dbReference>
<dbReference type="GO" id="GO:0003677">
    <property type="term" value="F:DNA binding"/>
    <property type="evidence" value="ECO:0007669"/>
    <property type="project" value="UniProtKB-UniRule"/>
</dbReference>
<dbReference type="GO" id="GO:0006355">
    <property type="term" value="P:regulation of DNA-templated transcription"/>
    <property type="evidence" value="ECO:0007669"/>
    <property type="project" value="UniProtKB-UniRule"/>
</dbReference>
<dbReference type="FunFam" id="1.10.10.200:FF:000002">
    <property type="entry name" value="Probable transcriptional regulatory protein CLM62_37755"/>
    <property type="match status" value="1"/>
</dbReference>
<dbReference type="Gene3D" id="1.10.10.200">
    <property type="match status" value="1"/>
</dbReference>
<dbReference type="Gene3D" id="3.30.70.980">
    <property type="match status" value="2"/>
</dbReference>
<dbReference type="HAMAP" id="MF_00693">
    <property type="entry name" value="Transcrip_reg_TACO1"/>
    <property type="match status" value="1"/>
</dbReference>
<dbReference type="InterPro" id="IPR017856">
    <property type="entry name" value="Integrase-like_N"/>
</dbReference>
<dbReference type="InterPro" id="IPR048300">
    <property type="entry name" value="TACO1_YebC-like_2nd/3rd_dom"/>
</dbReference>
<dbReference type="InterPro" id="IPR049083">
    <property type="entry name" value="TACO1_YebC_N"/>
</dbReference>
<dbReference type="InterPro" id="IPR002876">
    <property type="entry name" value="Transcrip_reg_TACO1-like"/>
</dbReference>
<dbReference type="InterPro" id="IPR026564">
    <property type="entry name" value="Transcrip_reg_TACO1-like_dom3"/>
</dbReference>
<dbReference type="InterPro" id="IPR029072">
    <property type="entry name" value="YebC-like"/>
</dbReference>
<dbReference type="NCBIfam" id="NF001030">
    <property type="entry name" value="PRK00110.1"/>
    <property type="match status" value="1"/>
</dbReference>
<dbReference type="NCBIfam" id="NF009044">
    <property type="entry name" value="PRK12378.1"/>
    <property type="match status" value="1"/>
</dbReference>
<dbReference type="NCBIfam" id="TIGR01033">
    <property type="entry name" value="YebC/PmpR family DNA-binding transcriptional regulator"/>
    <property type="match status" value="1"/>
</dbReference>
<dbReference type="PANTHER" id="PTHR12532:SF6">
    <property type="entry name" value="TRANSCRIPTIONAL REGULATORY PROTEIN YEBC-RELATED"/>
    <property type="match status" value="1"/>
</dbReference>
<dbReference type="PANTHER" id="PTHR12532">
    <property type="entry name" value="TRANSLATIONAL ACTIVATOR OF CYTOCHROME C OXIDASE 1"/>
    <property type="match status" value="1"/>
</dbReference>
<dbReference type="Pfam" id="PF20772">
    <property type="entry name" value="TACO1_YebC_N"/>
    <property type="match status" value="1"/>
</dbReference>
<dbReference type="Pfam" id="PF01709">
    <property type="entry name" value="Transcrip_reg"/>
    <property type="match status" value="1"/>
</dbReference>
<dbReference type="SUPFAM" id="SSF75625">
    <property type="entry name" value="YebC-like"/>
    <property type="match status" value="1"/>
</dbReference>